<sequence>MARFRPSNILGDPFALATISISILAWVIAFISSIVSAINARGYPTYSWWGVAYSLCIILGMTAVFGTDTGSVYGVAIVGYLSAGMVITTLGVNSLVYRSDSASQAAGAGFILMSMVIVIWIFYFGSTPQASHRGFIDSFALQKEHPGAYGNGRPMSTAFGNRPETTSSQAPQMYTSAQLNGFETSSPVSGYPGGAPGSENRSSSQPRFGNPSNANLTANGNENEVPQPTEYPYRAKAIYSYDANPEDANEISFTKHEILEVSDVSGRWWQARKSNGDTGIAPSNYLILL</sequence>
<feature type="chain" id="PRO_0000410362" description="High osmolarity signaling protein sho1">
    <location>
        <begin position="1"/>
        <end position="289"/>
    </location>
</feature>
<feature type="topological domain" description="Cytoplasmic" evidence="2">
    <location>
        <begin position="1"/>
        <end position="13"/>
    </location>
</feature>
<feature type="transmembrane region" description="Helical" evidence="2">
    <location>
        <begin position="14"/>
        <end position="34"/>
    </location>
</feature>
<feature type="topological domain" description="Extracellular" evidence="2">
    <location>
        <begin position="35"/>
        <end position="45"/>
    </location>
</feature>
<feature type="transmembrane region" description="Helical" evidence="2">
    <location>
        <begin position="46"/>
        <end position="66"/>
    </location>
</feature>
<feature type="topological domain" description="Cytoplasmic" evidence="2">
    <location>
        <begin position="67"/>
        <end position="71"/>
    </location>
</feature>
<feature type="transmembrane region" description="Helical" evidence="2">
    <location>
        <begin position="72"/>
        <end position="92"/>
    </location>
</feature>
<feature type="topological domain" description="Extracellular" evidence="2">
    <location>
        <begin position="93"/>
        <end position="104"/>
    </location>
</feature>
<feature type="transmembrane region" description="Helical" evidence="2">
    <location>
        <begin position="105"/>
        <end position="125"/>
    </location>
</feature>
<feature type="topological domain" description="Cytoplasmic" evidence="2">
    <location>
        <begin position="126"/>
        <end position="289"/>
    </location>
</feature>
<feature type="domain" description="SH3" evidence="3">
    <location>
        <begin position="230"/>
        <end position="289"/>
    </location>
</feature>
<feature type="region of interest" description="Disordered" evidence="4">
    <location>
        <begin position="150"/>
        <end position="169"/>
    </location>
</feature>
<feature type="region of interest" description="Disordered" evidence="4">
    <location>
        <begin position="185"/>
        <end position="229"/>
    </location>
</feature>
<feature type="compositionally biased region" description="Polar residues" evidence="4">
    <location>
        <begin position="199"/>
        <end position="226"/>
    </location>
</feature>
<keyword id="KW-1003">Cell membrane</keyword>
<keyword id="KW-0472">Membrane</keyword>
<keyword id="KW-1185">Reference proteome</keyword>
<keyword id="KW-0728">SH3 domain</keyword>
<keyword id="KW-0346">Stress response</keyword>
<keyword id="KW-0812">Transmembrane</keyword>
<keyword id="KW-1133">Transmembrane helix</keyword>
<protein>
    <recommendedName>
        <fullName>High osmolarity signaling protein sho1</fullName>
    </recommendedName>
    <alternativeName>
        <fullName>Osmosensor sho1</fullName>
    </alternativeName>
</protein>
<name>SHO1_ASPOR</name>
<accession>Q2U7N9</accession>
<gene>
    <name type="primary">sho1</name>
    <name type="ORF">AO090701000763</name>
</gene>
<reference key="1">
    <citation type="journal article" date="2005" name="Nature">
        <title>Genome sequencing and analysis of Aspergillus oryzae.</title>
        <authorList>
            <person name="Machida M."/>
            <person name="Asai K."/>
            <person name="Sano M."/>
            <person name="Tanaka T."/>
            <person name="Kumagai T."/>
            <person name="Terai G."/>
            <person name="Kusumoto K."/>
            <person name="Arima T."/>
            <person name="Akita O."/>
            <person name="Kashiwagi Y."/>
            <person name="Abe K."/>
            <person name="Gomi K."/>
            <person name="Horiuchi H."/>
            <person name="Kitamoto K."/>
            <person name="Kobayashi T."/>
            <person name="Takeuchi M."/>
            <person name="Denning D.W."/>
            <person name="Galagan J.E."/>
            <person name="Nierman W.C."/>
            <person name="Yu J."/>
            <person name="Archer D.B."/>
            <person name="Bennett J.W."/>
            <person name="Bhatnagar D."/>
            <person name="Cleveland T.E."/>
            <person name="Fedorova N.D."/>
            <person name="Gotoh O."/>
            <person name="Horikawa H."/>
            <person name="Hosoyama A."/>
            <person name="Ichinomiya M."/>
            <person name="Igarashi R."/>
            <person name="Iwashita K."/>
            <person name="Juvvadi P.R."/>
            <person name="Kato M."/>
            <person name="Kato Y."/>
            <person name="Kin T."/>
            <person name="Kokubun A."/>
            <person name="Maeda H."/>
            <person name="Maeyama N."/>
            <person name="Maruyama J."/>
            <person name="Nagasaki H."/>
            <person name="Nakajima T."/>
            <person name="Oda K."/>
            <person name="Okada K."/>
            <person name="Paulsen I."/>
            <person name="Sakamoto K."/>
            <person name="Sawano T."/>
            <person name="Takahashi M."/>
            <person name="Takase K."/>
            <person name="Terabayashi Y."/>
            <person name="Wortman J.R."/>
            <person name="Yamada O."/>
            <person name="Yamagata Y."/>
            <person name="Anazawa H."/>
            <person name="Hata Y."/>
            <person name="Koide Y."/>
            <person name="Komori T."/>
            <person name="Koyama Y."/>
            <person name="Minetoki T."/>
            <person name="Suharnan S."/>
            <person name="Tanaka A."/>
            <person name="Isono K."/>
            <person name="Kuhara S."/>
            <person name="Ogasawara N."/>
            <person name="Kikuchi H."/>
        </authorList>
    </citation>
    <scope>NUCLEOTIDE SEQUENCE [LARGE SCALE GENOMIC DNA]</scope>
    <source>
        <strain>ATCC 42149 / RIB 40</strain>
    </source>
</reference>
<evidence type="ECO:0000250" key="1"/>
<evidence type="ECO:0000255" key="2"/>
<evidence type="ECO:0000255" key="3">
    <source>
        <dbReference type="PROSITE-ProRule" id="PRU00192"/>
    </source>
</evidence>
<evidence type="ECO:0000256" key="4">
    <source>
        <dbReference type="SAM" id="MobiDB-lite"/>
    </source>
</evidence>
<evidence type="ECO:0000305" key="5"/>
<proteinExistence type="inferred from homology"/>
<organism>
    <name type="scientific">Aspergillus oryzae (strain ATCC 42149 / RIB 40)</name>
    <name type="common">Yellow koji mold</name>
    <dbReference type="NCBI Taxonomy" id="510516"/>
    <lineage>
        <taxon>Eukaryota</taxon>
        <taxon>Fungi</taxon>
        <taxon>Dikarya</taxon>
        <taxon>Ascomycota</taxon>
        <taxon>Pezizomycotina</taxon>
        <taxon>Eurotiomycetes</taxon>
        <taxon>Eurotiomycetidae</taxon>
        <taxon>Eurotiales</taxon>
        <taxon>Aspergillaceae</taxon>
        <taxon>Aspergillus</taxon>
        <taxon>Aspergillus subgen. Circumdati</taxon>
    </lineage>
</organism>
<comment type="function">
    <text evidence="1">Plasma membrane osmosensor that activates the high osmolarity glycerol (HOG) MAPK signaling pathway in response to high osmolarity.</text>
</comment>
<comment type="subunit">
    <text evidence="1">Forms homooligomers.</text>
</comment>
<comment type="subcellular location">
    <subcellularLocation>
        <location evidence="1">Cell membrane</location>
        <topology evidence="1">Multi-pass membrane protein</topology>
    </subcellularLocation>
</comment>
<comment type="similarity">
    <text evidence="5">Belongs to the SHO1 family.</text>
</comment>
<dbReference type="EMBL" id="BA000053">
    <property type="protein sequence ID" value="BAE62426.1"/>
    <property type="molecule type" value="Genomic_DNA"/>
</dbReference>
<dbReference type="SMR" id="Q2U7N9"/>
<dbReference type="STRING" id="510516.Q2U7N9"/>
<dbReference type="EnsemblFungi" id="BAE62426">
    <property type="protein sequence ID" value="BAE62426"/>
    <property type="gene ID" value="AO090701000763"/>
</dbReference>
<dbReference type="HOGENOM" id="CLU_043316_1_0_1"/>
<dbReference type="Proteomes" id="UP000006564">
    <property type="component" value="Chromosome 5"/>
</dbReference>
<dbReference type="GO" id="GO:0005886">
    <property type="term" value="C:plasma membrane"/>
    <property type="evidence" value="ECO:0007669"/>
    <property type="project" value="UniProtKB-SubCell"/>
</dbReference>
<dbReference type="CDD" id="cd11855">
    <property type="entry name" value="SH3_Sho1p"/>
    <property type="match status" value="1"/>
</dbReference>
<dbReference type="FunFam" id="2.30.30.40:FF:000213">
    <property type="entry name" value="High osmolarity signaling protein SHO1"/>
    <property type="match status" value="1"/>
</dbReference>
<dbReference type="Gene3D" id="2.30.30.40">
    <property type="entry name" value="SH3 Domains"/>
    <property type="match status" value="1"/>
</dbReference>
<dbReference type="InterPro" id="IPR036028">
    <property type="entry name" value="SH3-like_dom_sf"/>
</dbReference>
<dbReference type="InterPro" id="IPR001452">
    <property type="entry name" value="SH3_domain"/>
</dbReference>
<dbReference type="InterPro" id="IPR035522">
    <property type="entry name" value="Sho1_SH3"/>
</dbReference>
<dbReference type="Pfam" id="PF00018">
    <property type="entry name" value="SH3_1"/>
    <property type="match status" value="1"/>
</dbReference>
<dbReference type="SMART" id="SM00326">
    <property type="entry name" value="SH3"/>
    <property type="match status" value="1"/>
</dbReference>
<dbReference type="SUPFAM" id="SSF50044">
    <property type="entry name" value="SH3-domain"/>
    <property type="match status" value="1"/>
</dbReference>
<dbReference type="PROSITE" id="PS50002">
    <property type="entry name" value="SH3"/>
    <property type="match status" value="1"/>
</dbReference>